<reference key="1">
    <citation type="submission" date="2003-10" db="EMBL/GenBank/DDBJ databases">
        <title>The complete genome sequence of the alkaliphilic Bacillus clausii KSM-K16.</title>
        <authorList>
            <person name="Takaki Y."/>
            <person name="Kageyama Y."/>
            <person name="Shimamura S."/>
            <person name="Suzuki H."/>
            <person name="Nishi S."/>
            <person name="Hatada Y."/>
            <person name="Kawai S."/>
            <person name="Ito S."/>
            <person name="Horikoshi K."/>
        </authorList>
    </citation>
    <scope>NUCLEOTIDE SEQUENCE [LARGE SCALE GENOMIC DNA]</scope>
    <source>
        <strain>KSM-K16</strain>
    </source>
</reference>
<proteinExistence type="inferred from homology"/>
<name>RSIW_SHOC1</name>
<gene>
    <name type="primary">rsiW</name>
    <name type="ordered locus">ABC0240</name>
</gene>
<evidence type="ECO:0000250" key="1"/>
<evidence type="ECO:0000255" key="2"/>
<evidence type="ECO:0000305" key="3"/>
<dbReference type="EMBL" id="AP006627">
    <property type="protein sequence ID" value="BAD62783.1"/>
    <property type="molecule type" value="Genomic_DNA"/>
</dbReference>
<dbReference type="RefSeq" id="WP_011245103.1">
    <property type="nucleotide sequence ID" value="NC_006582.1"/>
</dbReference>
<dbReference type="SMR" id="Q5WLH2"/>
<dbReference type="STRING" id="66692.ABC0240"/>
<dbReference type="KEGG" id="bcl:ABC0240"/>
<dbReference type="eggNOG" id="COG5662">
    <property type="taxonomic scope" value="Bacteria"/>
</dbReference>
<dbReference type="HOGENOM" id="CLU_1347302_0_0_9"/>
<dbReference type="OrthoDB" id="9782842at2"/>
<dbReference type="Proteomes" id="UP000001168">
    <property type="component" value="Chromosome"/>
</dbReference>
<dbReference type="GO" id="GO:0016020">
    <property type="term" value="C:membrane"/>
    <property type="evidence" value="ECO:0007669"/>
    <property type="project" value="UniProtKB-SubCell"/>
</dbReference>
<dbReference type="GO" id="GO:0046872">
    <property type="term" value="F:metal ion binding"/>
    <property type="evidence" value="ECO:0007669"/>
    <property type="project" value="UniProtKB-KW"/>
</dbReference>
<dbReference type="Gene3D" id="1.10.10.1320">
    <property type="entry name" value="Anti-sigma factor, zinc-finger domain"/>
    <property type="match status" value="1"/>
</dbReference>
<dbReference type="InterPro" id="IPR041916">
    <property type="entry name" value="Anti_sigma_zinc_sf"/>
</dbReference>
<dbReference type="InterPro" id="IPR027383">
    <property type="entry name" value="Znf_put"/>
</dbReference>
<dbReference type="Pfam" id="PF13490">
    <property type="entry name" value="zf-HC2"/>
    <property type="match status" value="1"/>
</dbReference>
<sequence>MKTCHSHDELIHIYLDGDATKEQKEELYAHLQSCPSCREHLQELKKSIAFIQSSSHIEAPEGFTAGVMAKLPKTKKTAKWKLKAKRHPILVAAAIFLIMMSAAFFSAWSHTTDGIAVSGNGPFVIDKEAGVVVVPEGEVIDGDLVVRNGTLVLEGEVRGNVLLINSRFNKDTLYASPNQVTGEIEEVDKALSWAWYNMKEFFNEVVAVFDAGEDDPHSTDN</sequence>
<comment type="function">
    <text evidence="1">Is the anti-sigma factor for SigW. The presence of RsiW leads to the inactivation of SigW, and its proteolytic destruction to sigma-W activation (By similarity).</text>
</comment>
<comment type="cofactor">
    <cofactor evidence="1">
        <name>Zn(2+)</name>
        <dbReference type="ChEBI" id="CHEBI:29105"/>
    </cofactor>
    <text evidence="1">Binds 1 Zn(2+) ion per subunit.</text>
</comment>
<comment type="subcellular location">
    <subcellularLocation>
        <location>Membrane</location>
        <topology>Single-pass membrane protein</topology>
    </subcellularLocation>
    <text evidence="1">Site-2 clipped RsiW is released from the membrane to the cytoplasm.</text>
</comment>
<comment type="PTM">
    <text evidence="1">Is processed by three successive proteolytic events. First, the extracellular region of RsiW is cleaved by PrsW (Site-1 cleavage) in response to cell envelope stresses. Next, it undergoes cleavage at an intramembrane site (Site-2 cleavage) mediated by RasP. This cleavage uncovers a cryptic proteolytic tag with conserved alanine residues in the transmembrane segment, that is recognized mainly by the ClpXP protease, which completely degrades the protein in the cytoplasm and leads to the induction of the sigma-W-controlled genes (By similarity).</text>
</comment>
<comment type="similarity">
    <text evidence="3">Belongs to the zinc-associated anti-sigma factor (ZAS) superfamily. Anti-sigma-W factor family.</text>
</comment>
<keyword id="KW-0472">Membrane</keyword>
<keyword id="KW-0479">Metal-binding</keyword>
<keyword id="KW-1185">Reference proteome</keyword>
<keyword id="KW-0812">Transmembrane</keyword>
<keyword id="KW-1133">Transmembrane helix</keyword>
<keyword id="KW-0862">Zinc</keyword>
<accession>Q5WLH2</accession>
<feature type="chain" id="PRO_0000248139" description="Anti-sigma-W factor RsiW">
    <location>
        <begin position="1"/>
        <end position="221"/>
    </location>
</feature>
<feature type="topological domain" description="Cytoplasmic" evidence="2">
    <location>
        <begin position="1"/>
        <end position="87"/>
    </location>
</feature>
<feature type="transmembrane region" description="Helical" evidence="2">
    <location>
        <begin position="88"/>
        <end position="108"/>
    </location>
</feature>
<feature type="topological domain" description="Extracellular" evidence="2">
    <location>
        <begin position="109"/>
        <end position="221"/>
    </location>
</feature>
<feature type="binding site" evidence="1">
    <location>
        <position position="30"/>
    </location>
    <ligand>
        <name>Zn(2+)</name>
        <dbReference type="ChEBI" id="CHEBI:29105"/>
    </ligand>
</feature>
<feature type="binding site" evidence="1">
    <location>
        <position position="34"/>
    </location>
    <ligand>
        <name>Zn(2+)</name>
        <dbReference type="ChEBI" id="CHEBI:29105"/>
    </ligand>
</feature>
<feature type="binding site" evidence="1">
    <location>
        <position position="37"/>
    </location>
    <ligand>
        <name>Zn(2+)</name>
        <dbReference type="ChEBI" id="CHEBI:29105"/>
    </ligand>
</feature>
<organism>
    <name type="scientific">Shouchella clausii (strain KSM-K16)</name>
    <name type="common">Alkalihalobacillus clausii</name>
    <dbReference type="NCBI Taxonomy" id="66692"/>
    <lineage>
        <taxon>Bacteria</taxon>
        <taxon>Bacillati</taxon>
        <taxon>Bacillota</taxon>
        <taxon>Bacilli</taxon>
        <taxon>Bacillales</taxon>
        <taxon>Bacillaceae</taxon>
        <taxon>Shouchella</taxon>
    </lineage>
</organism>
<protein>
    <recommendedName>
        <fullName>Anti-sigma-W factor RsiW</fullName>
    </recommendedName>
</protein>